<sequence length="349" mass="38752">MAELLAIKWDDNRDKLILLDQTILPNKIEYIEYDTAEDVYDSIKDMIVRGAPAIGVTAAYGLYFAAKVAPEDNFKNFFKYLKEKSAYLDSSRPTAVNLSWALKIMESKALENKDKDVKEIKSILREEAKRIHEEDIEICKAIGENLVTLLKDGVGILTHCNAGQLATSKYGTATSPMYLAKEKGWNFKVYSDETRPRLQGSTLTALELYEAGIDVTTITDNMAAMVMSQGKIDAVIVGCDRIAANGDTANKIGTMGVSILAKYFGIPMYIAAPTPSIDIDTKTGKDIPIEERNPEEVTSRFGVWTAPRGVKVYNPGFDVTPHENITAIVTEKGIVYPPFEENLKKLFEK</sequence>
<protein>
    <recommendedName>
        <fullName evidence="1">5-deoxyribose 1-phosphate isomerase</fullName>
        <ecNumber evidence="1">5.3.1.-</ecNumber>
    </recommendedName>
</protein>
<organism>
    <name type="scientific">Clostridium botulinum (strain Loch Maree / Type A3)</name>
    <dbReference type="NCBI Taxonomy" id="498214"/>
    <lineage>
        <taxon>Bacteria</taxon>
        <taxon>Bacillati</taxon>
        <taxon>Bacillota</taxon>
        <taxon>Clostridia</taxon>
        <taxon>Eubacteriales</taxon>
        <taxon>Clostridiaceae</taxon>
        <taxon>Clostridium</taxon>
    </lineage>
</organism>
<evidence type="ECO:0000255" key="1">
    <source>
        <dbReference type="HAMAP-Rule" id="MF_02229"/>
    </source>
</evidence>
<name>DRDI_CLOBM</name>
<comment type="function">
    <text evidence="1">Catalyzes the isomerization of 5-deoxy-alpha-D-ribose 1-phosphate to 5-deoxy-D-ribulose 1-phosphate, as part of a 5-deoxyribose salvage pathway that recycles this toxic radical SAM enzyme by-product to mainstream metabolites.</text>
</comment>
<comment type="catalytic activity">
    <reaction evidence="1">
        <text>5-deoxy-alpha-D-ribose 1-phosphate = 5-deoxy-D-ribulose 1-phosphate</text>
        <dbReference type="Rhea" id="RHEA:61296"/>
        <dbReference type="ChEBI" id="CHEBI:58749"/>
        <dbReference type="ChEBI" id="CHEBI:144504"/>
    </reaction>
    <physiologicalReaction direction="left-to-right" evidence="1">
        <dbReference type="Rhea" id="RHEA:61297"/>
    </physiologicalReaction>
</comment>
<comment type="pathway">
    <text evidence="1">Carbohydrate degradation.</text>
</comment>
<comment type="similarity">
    <text evidence="1">Belongs to the EIF-2B alpha/beta/delta subunits family. DrdI subfamily.</text>
</comment>
<reference key="1">
    <citation type="journal article" date="2007" name="PLoS ONE">
        <title>Analysis of the neurotoxin complex genes in Clostridium botulinum A1-A4 and B1 strains: BoNT/A3, /Ba4 and /B1 clusters are located within plasmids.</title>
        <authorList>
            <person name="Smith T.J."/>
            <person name="Hill K.K."/>
            <person name="Foley B.T."/>
            <person name="Detter J.C."/>
            <person name="Munk A.C."/>
            <person name="Bruce D.C."/>
            <person name="Doggett N.A."/>
            <person name="Smith L.A."/>
            <person name="Marks J.D."/>
            <person name="Xie G."/>
            <person name="Brettin T.S."/>
        </authorList>
    </citation>
    <scope>NUCLEOTIDE SEQUENCE [LARGE SCALE GENOMIC DNA]</scope>
    <source>
        <strain>Loch Maree / Type A3</strain>
    </source>
</reference>
<gene>
    <name evidence="1" type="primary">drdI</name>
    <name type="ordered locus">CLK_0708</name>
</gene>
<feature type="chain" id="PRO_0000357165" description="5-deoxyribose 1-phosphate isomerase">
    <location>
        <begin position="1"/>
        <end position="349"/>
    </location>
</feature>
<feature type="active site" description="Proton donor" evidence="1">
    <location>
        <position position="240"/>
    </location>
</feature>
<feature type="binding site" evidence="1">
    <location>
        <begin position="49"/>
        <end position="51"/>
    </location>
    <ligand>
        <name>substrate</name>
    </ligand>
</feature>
<feature type="binding site" evidence="1">
    <location>
        <position position="92"/>
    </location>
    <ligand>
        <name>substrate</name>
    </ligand>
</feature>
<feature type="binding site" evidence="1">
    <location>
        <position position="199"/>
    </location>
    <ligand>
        <name>substrate</name>
    </ligand>
</feature>
<feature type="binding site" evidence="1">
    <location>
        <begin position="250"/>
        <end position="251"/>
    </location>
    <ligand>
        <name>substrate</name>
    </ligand>
</feature>
<feature type="site" description="Transition state stabilizer" evidence="1">
    <location>
        <position position="160"/>
    </location>
</feature>
<dbReference type="EC" id="5.3.1.-" evidence="1"/>
<dbReference type="EMBL" id="CP000962">
    <property type="protein sequence ID" value="ACA57104.1"/>
    <property type="molecule type" value="Genomic_DNA"/>
</dbReference>
<dbReference type="RefSeq" id="WP_012344890.1">
    <property type="nucleotide sequence ID" value="NC_010520.1"/>
</dbReference>
<dbReference type="SMR" id="B1KZY3"/>
<dbReference type="KEGG" id="cbl:CLK_0708"/>
<dbReference type="HOGENOM" id="CLU_016218_1_2_9"/>
<dbReference type="GO" id="GO:0046523">
    <property type="term" value="F:S-methyl-5-thioribose-1-phosphate isomerase activity"/>
    <property type="evidence" value="ECO:0007669"/>
    <property type="project" value="InterPro"/>
</dbReference>
<dbReference type="GO" id="GO:0019509">
    <property type="term" value="P:L-methionine salvage from methylthioadenosine"/>
    <property type="evidence" value="ECO:0007669"/>
    <property type="project" value="TreeGrafter"/>
</dbReference>
<dbReference type="GO" id="GO:0019323">
    <property type="term" value="P:pentose catabolic process"/>
    <property type="evidence" value="ECO:0007669"/>
    <property type="project" value="UniProtKB-UniRule"/>
</dbReference>
<dbReference type="FunFam" id="1.20.120.420:FF:000001">
    <property type="entry name" value="Methylthioribose-1-phosphate isomerase"/>
    <property type="match status" value="1"/>
</dbReference>
<dbReference type="FunFam" id="3.40.50.10470:FF:000006">
    <property type="entry name" value="Methylthioribose-1-phosphate isomerase"/>
    <property type="match status" value="1"/>
</dbReference>
<dbReference type="Gene3D" id="1.20.120.420">
    <property type="entry name" value="translation initiation factor eif-2b, domain 1"/>
    <property type="match status" value="1"/>
</dbReference>
<dbReference type="Gene3D" id="3.40.50.10470">
    <property type="entry name" value="Translation initiation factor eif-2b, domain 2"/>
    <property type="match status" value="1"/>
</dbReference>
<dbReference type="HAMAP" id="MF_02229">
    <property type="entry name" value="Deoxyribose1P_isomerase"/>
    <property type="match status" value="1"/>
</dbReference>
<dbReference type="HAMAP" id="MF_01678">
    <property type="entry name" value="Salvage_MtnA"/>
    <property type="match status" value="1"/>
</dbReference>
<dbReference type="InterPro" id="IPR043679">
    <property type="entry name" value="Deoxyribose1P_isomerase_DrdI"/>
</dbReference>
<dbReference type="InterPro" id="IPR000649">
    <property type="entry name" value="IF-2B-related"/>
</dbReference>
<dbReference type="InterPro" id="IPR005251">
    <property type="entry name" value="IF-M1Pi"/>
</dbReference>
<dbReference type="InterPro" id="IPR042529">
    <property type="entry name" value="IF_2B-like_C"/>
</dbReference>
<dbReference type="InterPro" id="IPR011559">
    <property type="entry name" value="Initiation_fac_2B_a/b/d"/>
</dbReference>
<dbReference type="InterPro" id="IPR027363">
    <property type="entry name" value="M1Pi_N"/>
</dbReference>
<dbReference type="InterPro" id="IPR037171">
    <property type="entry name" value="NagB/RpiA_transferase-like"/>
</dbReference>
<dbReference type="NCBIfam" id="TIGR00524">
    <property type="entry name" value="eIF-2B_rel"/>
    <property type="match status" value="1"/>
</dbReference>
<dbReference type="NCBIfam" id="NF004326">
    <property type="entry name" value="PRK05720.1"/>
    <property type="match status" value="1"/>
</dbReference>
<dbReference type="NCBIfam" id="TIGR00512">
    <property type="entry name" value="salvage_mtnA"/>
    <property type="match status" value="1"/>
</dbReference>
<dbReference type="PANTHER" id="PTHR43475">
    <property type="entry name" value="METHYLTHIORIBOSE-1-PHOSPHATE ISOMERASE"/>
    <property type="match status" value="1"/>
</dbReference>
<dbReference type="PANTHER" id="PTHR43475:SF1">
    <property type="entry name" value="METHYLTHIORIBOSE-1-PHOSPHATE ISOMERASE"/>
    <property type="match status" value="1"/>
</dbReference>
<dbReference type="Pfam" id="PF01008">
    <property type="entry name" value="IF-2B"/>
    <property type="match status" value="1"/>
</dbReference>
<dbReference type="SUPFAM" id="SSF100950">
    <property type="entry name" value="NagB/RpiA/CoA transferase-like"/>
    <property type="match status" value="1"/>
</dbReference>
<proteinExistence type="inferred from homology"/>
<keyword id="KW-0119">Carbohydrate metabolism</keyword>
<keyword id="KW-0413">Isomerase</keyword>
<accession>B1KZY3</accession>